<gene>
    <name evidence="1" type="primary">rplQ</name>
    <name type="ordered locus">Emin_1389</name>
</gene>
<organism>
    <name type="scientific">Elusimicrobium minutum (strain Pei191)</name>
    <dbReference type="NCBI Taxonomy" id="445932"/>
    <lineage>
        <taxon>Bacteria</taxon>
        <taxon>Pseudomonadati</taxon>
        <taxon>Elusimicrobiota</taxon>
        <taxon>Elusimicrobia</taxon>
        <taxon>Elusimicrobiales</taxon>
        <taxon>Elusimicrobiaceae</taxon>
        <taxon>Elusimicrobium</taxon>
    </lineage>
</organism>
<protein>
    <recommendedName>
        <fullName evidence="1">Large ribosomal subunit protein bL17</fullName>
    </recommendedName>
    <alternativeName>
        <fullName evidence="2">50S ribosomal protein L17</fullName>
    </alternativeName>
</protein>
<evidence type="ECO:0000255" key="1">
    <source>
        <dbReference type="HAMAP-Rule" id="MF_01368"/>
    </source>
</evidence>
<evidence type="ECO:0000305" key="2"/>
<comment type="subunit">
    <text evidence="1">Part of the 50S ribosomal subunit. Contacts protein L32.</text>
</comment>
<comment type="similarity">
    <text evidence="1">Belongs to the bacterial ribosomal protein bL17 family.</text>
</comment>
<keyword id="KW-1185">Reference proteome</keyword>
<keyword id="KW-0687">Ribonucleoprotein</keyword>
<keyword id="KW-0689">Ribosomal protein</keyword>
<proteinExistence type="inferred from homology"/>
<name>RL17_ELUMP</name>
<reference key="1">
    <citation type="journal article" date="2009" name="Appl. Environ. Microbiol.">
        <title>Genomic analysis of 'Elusimicrobium minutum,' the first cultivated representative of the phylum 'Elusimicrobia' (formerly termite group 1).</title>
        <authorList>
            <person name="Herlemann D.P.R."/>
            <person name="Geissinger O."/>
            <person name="Ikeda-Ohtsubo W."/>
            <person name="Kunin V."/>
            <person name="Sun H."/>
            <person name="Lapidus A."/>
            <person name="Hugenholtz P."/>
            <person name="Brune A."/>
        </authorList>
    </citation>
    <scope>NUCLEOTIDE SEQUENCE [LARGE SCALE GENOMIC DNA]</scope>
    <source>
        <strain>Pei191</strain>
    </source>
</reference>
<sequence>MIKNTGHRKLGKTGSHRRAMLNNMATSIILHEQVETTVAKAKEVRRVVDNLVTLAKNGQNLQVKDTLKDKVAYKKLFEVLASRYEKRPGGFTRIYRAGKRPGDNAEVAIIKLVD</sequence>
<feature type="chain" id="PRO_1000144424" description="Large ribosomal subunit protein bL17">
    <location>
        <begin position="1"/>
        <end position="114"/>
    </location>
</feature>
<accession>B2KEJ2</accession>
<dbReference type="EMBL" id="CP001055">
    <property type="protein sequence ID" value="ACC98938.1"/>
    <property type="molecule type" value="Genomic_DNA"/>
</dbReference>
<dbReference type="RefSeq" id="WP_012415553.1">
    <property type="nucleotide sequence ID" value="NC_010644.1"/>
</dbReference>
<dbReference type="SMR" id="B2KEJ2"/>
<dbReference type="STRING" id="445932.Emin_1389"/>
<dbReference type="KEGG" id="emi:Emin_1389"/>
<dbReference type="HOGENOM" id="CLU_074407_2_0_0"/>
<dbReference type="OrthoDB" id="9809073at2"/>
<dbReference type="Proteomes" id="UP000001029">
    <property type="component" value="Chromosome"/>
</dbReference>
<dbReference type="GO" id="GO:0015934">
    <property type="term" value="C:large ribosomal subunit"/>
    <property type="evidence" value="ECO:0007669"/>
    <property type="project" value="TreeGrafter"/>
</dbReference>
<dbReference type="GO" id="GO:0003735">
    <property type="term" value="F:structural constituent of ribosome"/>
    <property type="evidence" value="ECO:0007669"/>
    <property type="project" value="InterPro"/>
</dbReference>
<dbReference type="GO" id="GO:0006412">
    <property type="term" value="P:translation"/>
    <property type="evidence" value="ECO:0007669"/>
    <property type="project" value="UniProtKB-UniRule"/>
</dbReference>
<dbReference type="Gene3D" id="3.90.1030.10">
    <property type="entry name" value="Ribosomal protein L17"/>
    <property type="match status" value="1"/>
</dbReference>
<dbReference type="HAMAP" id="MF_01368">
    <property type="entry name" value="Ribosomal_bL17"/>
    <property type="match status" value="1"/>
</dbReference>
<dbReference type="InterPro" id="IPR000456">
    <property type="entry name" value="Ribosomal_bL17"/>
</dbReference>
<dbReference type="InterPro" id="IPR036373">
    <property type="entry name" value="Ribosomal_bL17_sf"/>
</dbReference>
<dbReference type="NCBIfam" id="TIGR00059">
    <property type="entry name" value="L17"/>
    <property type="match status" value="1"/>
</dbReference>
<dbReference type="PANTHER" id="PTHR14413:SF16">
    <property type="entry name" value="LARGE RIBOSOMAL SUBUNIT PROTEIN BL17M"/>
    <property type="match status" value="1"/>
</dbReference>
<dbReference type="PANTHER" id="PTHR14413">
    <property type="entry name" value="RIBOSOMAL PROTEIN L17"/>
    <property type="match status" value="1"/>
</dbReference>
<dbReference type="Pfam" id="PF01196">
    <property type="entry name" value="Ribosomal_L17"/>
    <property type="match status" value="1"/>
</dbReference>
<dbReference type="SUPFAM" id="SSF64263">
    <property type="entry name" value="Prokaryotic ribosomal protein L17"/>
    <property type="match status" value="1"/>
</dbReference>